<sequence length="548" mass="59608">MAMKIPKSGYNRFMKEGAQHFKGTDEAVQRNIEACTELASQIRSAYGPNGMNKMVINHIEKLFVTNDAATILKELEIQHPAAKIIIMATEMQEKQIGDNTNTVVILAAALLEHASNLINMGMTPQEVAAGYEQAAEKALEILPSLVVKEASDMKNIEEVRQYLRSAITSKQYDNEDVIADLVAKACVTTCPANSYNFNVDNIRICKIIGSGVHTSKVMNGMVFKRGAEGEIRSAQDARIAVYTCPFDLTQTETKGTVLIENADELVNFSKGEESEVEEQVKAIADNGVKVVVAAGKFGDLYLHFLNKYKIMAVRLTSKFDLRRLCRTVGAQPQARICAPAVNLLGHCDSVSVTEIGDENVVVFDKNSETGKVATIIIRGSSQSRIDDVERAVDDAVNTYKALTKDGKLLAGAGAVEIELAKEIESYGAKAPGLEQYAIKKFAHALETLPKAIAENAGMPTTETLTKLYAEHVNGKKNAGIDVWKREVMDAVAHNIFDLYAGKRLAIKLATDAAATILKVDQIIMAKQATGGPKPRGPKQQDEDDDGMA</sequence>
<evidence type="ECO:0000250" key="1"/>
<evidence type="ECO:0000250" key="2">
    <source>
        <dbReference type="UniProtKB" id="P50990"/>
    </source>
</evidence>
<evidence type="ECO:0000250" key="3">
    <source>
        <dbReference type="UniProtKB" id="Q9N358"/>
    </source>
</evidence>
<evidence type="ECO:0000255" key="4"/>
<evidence type="ECO:0000256" key="5">
    <source>
        <dbReference type="SAM" id="MobiDB-lite"/>
    </source>
</evidence>
<evidence type="ECO:0000312" key="6">
    <source>
        <dbReference type="EMBL" id="CAP28250.1"/>
    </source>
</evidence>
<dbReference type="EMBL" id="HE601100">
    <property type="protein sequence ID" value="CAP28250.1"/>
    <property type="molecule type" value="Genomic_DNA"/>
</dbReference>
<dbReference type="SMR" id="A8X6I9"/>
<dbReference type="FunCoup" id="A8X6I9">
    <property type="interactions" value="2498"/>
</dbReference>
<dbReference type="STRING" id="6238.A8X6I9"/>
<dbReference type="EnsemblMetazoa" id="CBG08425.1">
    <property type="protein sequence ID" value="CBG08425.1"/>
    <property type="gene ID" value="WBGene00030217"/>
</dbReference>
<dbReference type="KEGG" id="cbr:CBG_08425"/>
<dbReference type="CTD" id="8576601"/>
<dbReference type="WormBase" id="CBG08425">
    <property type="protein sequence ID" value="CBP02058"/>
    <property type="gene ID" value="WBGene00030217"/>
    <property type="gene designation" value="Cbr-cct-8"/>
</dbReference>
<dbReference type="eggNOG" id="KOG0362">
    <property type="taxonomic scope" value="Eukaryota"/>
</dbReference>
<dbReference type="HOGENOM" id="CLU_008891_4_2_1"/>
<dbReference type="InParanoid" id="A8X6I9"/>
<dbReference type="OMA" id="WGLKYAV"/>
<dbReference type="Proteomes" id="UP000008549">
    <property type="component" value="Unassembled WGS sequence"/>
</dbReference>
<dbReference type="GO" id="GO:0005832">
    <property type="term" value="C:chaperonin-containing T-complex"/>
    <property type="evidence" value="ECO:0000318"/>
    <property type="project" value="GO_Central"/>
</dbReference>
<dbReference type="GO" id="GO:0005524">
    <property type="term" value="F:ATP binding"/>
    <property type="evidence" value="ECO:0007669"/>
    <property type="project" value="UniProtKB-KW"/>
</dbReference>
<dbReference type="GO" id="GO:0016887">
    <property type="term" value="F:ATP hydrolysis activity"/>
    <property type="evidence" value="ECO:0007669"/>
    <property type="project" value="InterPro"/>
</dbReference>
<dbReference type="GO" id="GO:0140662">
    <property type="term" value="F:ATP-dependent protein folding chaperone"/>
    <property type="evidence" value="ECO:0007669"/>
    <property type="project" value="InterPro"/>
</dbReference>
<dbReference type="GO" id="GO:0051082">
    <property type="term" value="F:unfolded protein binding"/>
    <property type="evidence" value="ECO:0000318"/>
    <property type="project" value="GO_Central"/>
</dbReference>
<dbReference type="GO" id="GO:0006457">
    <property type="term" value="P:protein folding"/>
    <property type="evidence" value="ECO:0000318"/>
    <property type="project" value="GO_Central"/>
</dbReference>
<dbReference type="CDD" id="cd03341">
    <property type="entry name" value="TCP1_theta"/>
    <property type="match status" value="1"/>
</dbReference>
<dbReference type="FunFam" id="3.50.7.10:FF:000008">
    <property type="entry name" value="T-complex protein 1 subunit theta"/>
    <property type="match status" value="1"/>
</dbReference>
<dbReference type="Gene3D" id="3.50.7.10">
    <property type="entry name" value="GroEL"/>
    <property type="match status" value="1"/>
</dbReference>
<dbReference type="Gene3D" id="1.10.560.10">
    <property type="entry name" value="GroEL-like equatorial domain"/>
    <property type="match status" value="1"/>
</dbReference>
<dbReference type="Gene3D" id="3.30.260.10">
    <property type="entry name" value="TCP-1-like chaperonin intermediate domain"/>
    <property type="match status" value="1"/>
</dbReference>
<dbReference type="InterPro" id="IPR012721">
    <property type="entry name" value="Chap_CCT_theta"/>
</dbReference>
<dbReference type="InterPro" id="IPR017998">
    <property type="entry name" value="Chaperone_TCP-1"/>
</dbReference>
<dbReference type="InterPro" id="IPR002194">
    <property type="entry name" value="Chaperonin_TCP-1_CS"/>
</dbReference>
<dbReference type="InterPro" id="IPR002423">
    <property type="entry name" value="Cpn60/GroEL/TCP-1"/>
</dbReference>
<dbReference type="InterPro" id="IPR027409">
    <property type="entry name" value="GroEL-like_apical_dom_sf"/>
</dbReference>
<dbReference type="InterPro" id="IPR027413">
    <property type="entry name" value="GROEL-like_equatorial_sf"/>
</dbReference>
<dbReference type="InterPro" id="IPR027410">
    <property type="entry name" value="TCP-1-like_intermed_sf"/>
</dbReference>
<dbReference type="NCBIfam" id="TIGR02346">
    <property type="entry name" value="chap_CCT_theta"/>
    <property type="match status" value="1"/>
</dbReference>
<dbReference type="PANTHER" id="PTHR11353">
    <property type="entry name" value="CHAPERONIN"/>
    <property type="match status" value="1"/>
</dbReference>
<dbReference type="Pfam" id="PF00118">
    <property type="entry name" value="Cpn60_TCP1"/>
    <property type="match status" value="1"/>
</dbReference>
<dbReference type="PRINTS" id="PR00304">
    <property type="entry name" value="TCOMPLEXTCP1"/>
</dbReference>
<dbReference type="SUPFAM" id="SSF52029">
    <property type="entry name" value="GroEL apical domain-like"/>
    <property type="match status" value="1"/>
</dbReference>
<dbReference type="SUPFAM" id="SSF48592">
    <property type="entry name" value="GroEL equatorial domain-like"/>
    <property type="match status" value="1"/>
</dbReference>
<dbReference type="SUPFAM" id="SSF54849">
    <property type="entry name" value="GroEL-intermediate domain like"/>
    <property type="match status" value="1"/>
</dbReference>
<dbReference type="PROSITE" id="PS00750">
    <property type="entry name" value="TCP1_1"/>
    <property type="match status" value="1"/>
</dbReference>
<dbReference type="PROSITE" id="PS00751">
    <property type="entry name" value="TCP1_2"/>
    <property type="match status" value="1"/>
</dbReference>
<comment type="function">
    <text evidence="2 3">Molecular chaperone; assists the folding of proteins upon ATP hydrolysis. Known to play a role, in vitro, in the folding of actin and tubulin. Required for correct subcellular localization of pgl-1 (By similarity).</text>
</comment>
<comment type="subunit">
    <text evidence="1">Heterooligomeric complex.</text>
</comment>
<comment type="subcellular location">
    <subcellularLocation>
        <location evidence="2">Cytoplasm</location>
    </subcellularLocation>
</comment>
<comment type="similarity">
    <text evidence="4">Belongs to the TCP-1 chaperonin family.</text>
</comment>
<gene>
    <name evidence="6" type="primary">cct-8</name>
    <name type="ORF">CBG08425</name>
</gene>
<accession>A8X6I9</accession>
<organism>
    <name type="scientific">Caenorhabditis briggsae</name>
    <dbReference type="NCBI Taxonomy" id="6238"/>
    <lineage>
        <taxon>Eukaryota</taxon>
        <taxon>Metazoa</taxon>
        <taxon>Ecdysozoa</taxon>
        <taxon>Nematoda</taxon>
        <taxon>Chromadorea</taxon>
        <taxon>Rhabditida</taxon>
        <taxon>Rhabditina</taxon>
        <taxon>Rhabditomorpha</taxon>
        <taxon>Rhabditoidea</taxon>
        <taxon>Rhabditidae</taxon>
        <taxon>Peloderinae</taxon>
        <taxon>Caenorhabditis</taxon>
    </lineage>
</organism>
<proteinExistence type="inferred from homology"/>
<feature type="chain" id="PRO_0000394402" description="T-complex protein 1 subunit theta">
    <location>
        <begin position="1"/>
        <end position="548"/>
    </location>
</feature>
<feature type="region of interest" description="Disordered" evidence="5">
    <location>
        <begin position="528"/>
        <end position="548"/>
    </location>
</feature>
<reference evidence="6" key="1">
    <citation type="journal article" date="2003" name="PLoS Biol.">
        <title>The genome sequence of Caenorhabditis briggsae: a platform for comparative genomics.</title>
        <authorList>
            <person name="Stein L.D."/>
            <person name="Bao Z."/>
            <person name="Blasiar D."/>
            <person name="Blumenthal T."/>
            <person name="Brent M.R."/>
            <person name="Chen N."/>
            <person name="Chinwalla A."/>
            <person name="Clarke L."/>
            <person name="Clee C."/>
            <person name="Coghlan A."/>
            <person name="Coulson A."/>
            <person name="D'Eustachio P."/>
            <person name="Fitch D.H.A."/>
            <person name="Fulton L.A."/>
            <person name="Fulton R.E."/>
            <person name="Griffiths-Jones S."/>
            <person name="Harris T.W."/>
            <person name="Hillier L.W."/>
            <person name="Kamath R."/>
            <person name="Kuwabara P.E."/>
            <person name="Mardis E.R."/>
            <person name="Marra M.A."/>
            <person name="Miner T.L."/>
            <person name="Minx P."/>
            <person name="Mullikin J.C."/>
            <person name="Plumb R.W."/>
            <person name="Rogers J."/>
            <person name="Schein J.E."/>
            <person name="Sohrmann M."/>
            <person name="Spieth J."/>
            <person name="Stajich J.E."/>
            <person name="Wei C."/>
            <person name="Willey D."/>
            <person name="Wilson R.K."/>
            <person name="Durbin R.M."/>
            <person name="Waterston R.H."/>
        </authorList>
    </citation>
    <scope>NUCLEOTIDE SEQUENCE [LARGE SCALE GENOMIC DNA]</scope>
    <source>
        <strain>AF16</strain>
    </source>
</reference>
<keyword id="KW-0067">ATP-binding</keyword>
<keyword id="KW-0143">Chaperone</keyword>
<keyword id="KW-0963">Cytoplasm</keyword>
<keyword id="KW-0547">Nucleotide-binding</keyword>
<keyword id="KW-1185">Reference proteome</keyword>
<protein>
    <recommendedName>
        <fullName evidence="3">T-complex protein 1 subunit theta</fullName>
        <shortName evidence="3">TCP-1-theta</shortName>
    </recommendedName>
    <alternativeName>
        <fullName evidence="3">CCT-theta</fullName>
    </alternativeName>
</protein>
<name>TCPQ_CAEBR</name>